<gene>
    <name evidence="1" type="primary">nhaP2</name>
    <name type="synonym">cvrA</name>
    <name type="ordered locus">SeD_A1517</name>
</gene>
<comment type="function">
    <text evidence="1">K(+)/H(+) antiporter that extrudes potassium in exchange for external protons and maintains the internal concentration of potassium under toxic levels.</text>
</comment>
<comment type="catalytic activity">
    <reaction evidence="1">
        <text>K(+)(in) + H(+)(out) = K(+)(out) + H(+)(in)</text>
        <dbReference type="Rhea" id="RHEA:29467"/>
        <dbReference type="ChEBI" id="CHEBI:15378"/>
        <dbReference type="ChEBI" id="CHEBI:29103"/>
    </reaction>
    <physiologicalReaction direction="left-to-right" evidence="1">
        <dbReference type="Rhea" id="RHEA:29468"/>
    </physiologicalReaction>
</comment>
<comment type="subcellular location">
    <subcellularLocation>
        <location evidence="1">Cell inner membrane</location>
        <topology evidence="1">Multi-pass membrane protein</topology>
    </subcellularLocation>
</comment>
<comment type="similarity">
    <text evidence="1">Belongs to the monovalent cation:proton antiporter 1 (CPA1) transporter (TC 2.A.36) family. NhaP2 subfamily.</text>
</comment>
<name>NHAP2_SALDC</name>
<feature type="chain" id="PRO_1000136710" description="K(+)/H(+) antiporter NhaP2">
    <location>
        <begin position="1"/>
        <end position="577"/>
    </location>
</feature>
<feature type="transmembrane region" description="Helical" evidence="1">
    <location>
        <begin position="3"/>
        <end position="23"/>
    </location>
</feature>
<feature type="transmembrane region" description="Helical" evidence="1">
    <location>
        <begin position="30"/>
        <end position="50"/>
    </location>
</feature>
<feature type="transmembrane region" description="Helical" evidence="1">
    <location>
        <begin position="58"/>
        <end position="78"/>
    </location>
</feature>
<feature type="transmembrane region" description="Helical" evidence="1">
    <location>
        <begin position="87"/>
        <end position="107"/>
    </location>
</feature>
<feature type="transmembrane region" description="Helical" evidence="1">
    <location>
        <begin position="109"/>
        <end position="129"/>
    </location>
</feature>
<feature type="transmembrane region" description="Helical" evidence="1">
    <location>
        <begin position="185"/>
        <end position="205"/>
    </location>
</feature>
<feature type="transmembrane region" description="Helical" evidence="1">
    <location>
        <begin position="221"/>
        <end position="241"/>
    </location>
</feature>
<feature type="transmembrane region" description="Helical" evidence="1">
    <location>
        <begin position="271"/>
        <end position="291"/>
    </location>
</feature>
<feature type="transmembrane region" description="Helical" evidence="1">
    <location>
        <begin position="293"/>
        <end position="313"/>
    </location>
</feature>
<feature type="transmembrane region" description="Helical" evidence="1">
    <location>
        <begin position="334"/>
        <end position="354"/>
    </location>
</feature>
<feature type="transmembrane region" description="Helical" evidence="1">
    <location>
        <begin position="363"/>
        <end position="383"/>
    </location>
</feature>
<feature type="domain" description="RCK C-terminal" evidence="1">
    <location>
        <begin position="403"/>
        <end position="485"/>
    </location>
</feature>
<sequence length="577" mass="62469">MDAATIISLFILGSILVTSSILLSSFSSRLGIPILVIFLAIGMLAGVDGIGGIPFDNYPFAYMVSNLALAIILLDGGMRTQASSFRVALGPALSLATLGVLITSGLTGMMAAWLFHLDLIEGLLIGAIVGSTDAAAVFSLLGGKGLNERVGSTLEIESGSNDPMAVFLTITLIEMIQKHETGLDWMFAVHIIQQFGLGIVFGLGGGYLLQQMINRISLPSGLYPMLALSGGILIFALTTALEGSGILAVYLCGFLLGNRPIRNRYGILQNFDGLAWLAQIAMFLVLGLLVTPSDLWPIAVPALILSIWMIFFARPLSVFTGLLPFRGFNLRERIFISWVGLRGAVPIILAVFPMMAGLENARLFFNVAFFVVLVSLLLQGTSLSWAAKRAKVVVPPVGWPVSRVGLDIHPDNPWEQFIYQLSADKWCVGAALRDLHMPNETRIAALFRNNELFHPTGSTRLQEGDVLCVIGRERDLPALGKLFSQSPPVSLDQRFFGDFILEANAKFADVALIYGLEEGTEYRDKQQTLGEIIQQLLGAAPVVGDQVEFGGMIWTVAEKEDNVVRKIGVRVAEDEAE</sequence>
<protein>
    <recommendedName>
        <fullName evidence="1">K(+)/H(+) antiporter NhaP2</fullName>
    </recommendedName>
    <alternativeName>
        <fullName evidence="1">Potassium/proton antiporter NhaP2</fullName>
    </alternativeName>
</protein>
<dbReference type="EMBL" id="CP001144">
    <property type="protein sequence ID" value="ACH76086.1"/>
    <property type="molecule type" value="Genomic_DNA"/>
</dbReference>
<dbReference type="RefSeq" id="WP_000338376.1">
    <property type="nucleotide sequence ID" value="NC_011205.1"/>
</dbReference>
<dbReference type="SMR" id="B5FTN3"/>
<dbReference type="KEGG" id="sed:SeD_A1517"/>
<dbReference type="HOGENOM" id="CLU_005912_9_2_6"/>
<dbReference type="Proteomes" id="UP000008322">
    <property type="component" value="Chromosome"/>
</dbReference>
<dbReference type="GO" id="GO:0005886">
    <property type="term" value="C:plasma membrane"/>
    <property type="evidence" value="ECO:0007669"/>
    <property type="project" value="UniProtKB-SubCell"/>
</dbReference>
<dbReference type="GO" id="GO:0050660">
    <property type="term" value="F:flavin adenine dinucleotide binding"/>
    <property type="evidence" value="ECO:0007669"/>
    <property type="project" value="InterPro"/>
</dbReference>
<dbReference type="GO" id="GO:0015386">
    <property type="term" value="F:potassium:proton antiporter activity"/>
    <property type="evidence" value="ECO:0007669"/>
    <property type="project" value="UniProtKB-UniRule"/>
</dbReference>
<dbReference type="GO" id="GO:0006884">
    <property type="term" value="P:cell volume homeostasis"/>
    <property type="evidence" value="ECO:0007669"/>
    <property type="project" value="InterPro"/>
</dbReference>
<dbReference type="FunFam" id="1.20.1530.20:FF:000002">
    <property type="entry name" value="K(+)/H(+) antiporter NhaP2"/>
    <property type="match status" value="1"/>
</dbReference>
<dbReference type="Gene3D" id="1.20.1530.20">
    <property type="match status" value="1"/>
</dbReference>
<dbReference type="Gene3D" id="3.30.465.10">
    <property type="match status" value="1"/>
</dbReference>
<dbReference type="Gene3D" id="3.30.70.1450">
    <property type="entry name" value="Regulator of K+ conductance, C-terminal domain"/>
    <property type="match status" value="1"/>
</dbReference>
<dbReference type="HAMAP" id="MF_01075">
    <property type="entry name" value="NhaP2"/>
    <property type="match status" value="1"/>
</dbReference>
<dbReference type="InterPro" id="IPR006153">
    <property type="entry name" value="Cation/H_exchanger_TM"/>
</dbReference>
<dbReference type="InterPro" id="IPR036318">
    <property type="entry name" value="FAD-bd_PCMH-like_sf"/>
</dbReference>
<dbReference type="InterPro" id="IPR016169">
    <property type="entry name" value="FAD-bd_PCMH_sub2"/>
</dbReference>
<dbReference type="InterPro" id="IPR038770">
    <property type="entry name" value="Na+/solute_symporter_sf"/>
</dbReference>
<dbReference type="InterPro" id="IPR023729">
    <property type="entry name" value="NhaP2"/>
</dbReference>
<dbReference type="InterPro" id="IPR006037">
    <property type="entry name" value="RCK_C"/>
</dbReference>
<dbReference type="InterPro" id="IPR036721">
    <property type="entry name" value="RCK_C_sf"/>
</dbReference>
<dbReference type="InterPro" id="IPR005170">
    <property type="entry name" value="Transptr-assoc_dom"/>
</dbReference>
<dbReference type="NCBIfam" id="NF003714">
    <property type="entry name" value="PRK05326.1-1"/>
    <property type="match status" value="1"/>
</dbReference>
<dbReference type="NCBIfam" id="NF003715">
    <property type="entry name" value="PRK05326.1-2"/>
    <property type="match status" value="1"/>
</dbReference>
<dbReference type="NCBIfam" id="NF003716">
    <property type="entry name" value="PRK05326.1-3"/>
    <property type="match status" value="1"/>
</dbReference>
<dbReference type="PANTHER" id="PTHR32507:SF7">
    <property type="entry name" value="K(+)_H(+) ANTIPORTER NHAP2"/>
    <property type="match status" value="1"/>
</dbReference>
<dbReference type="PANTHER" id="PTHR32507">
    <property type="entry name" value="NA(+)/H(+) ANTIPORTER 1"/>
    <property type="match status" value="1"/>
</dbReference>
<dbReference type="Pfam" id="PF03471">
    <property type="entry name" value="CorC_HlyC"/>
    <property type="match status" value="1"/>
</dbReference>
<dbReference type="Pfam" id="PF00999">
    <property type="entry name" value="Na_H_Exchanger"/>
    <property type="match status" value="1"/>
</dbReference>
<dbReference type="Pfam" id="PF02080">
    <property type="entry name" value="TrkA_C"/>
    <property type="match status" value="1"/>
</dbReference>
<dbReference type="SMART" id="SM01091">
    <property type="entry name" value="CorC_HlyC"/>
    <property type="match status" value="1"/>
</dbReference>
<dbReference type="SUPFAM" id="SSF56176">
    <property type="entry name" value="FAD-binding/transporter-associated domain-like"/>
    <property type="match status" value="1"/>
</dbReference>
<dbReference type="SUPFAM" id="SSF116726">
    <property type="entry name" value="TrkA C-terminal domain-like"/>
    <property type="match status" value="1"/>
</dbReference>
<dbReference type="PROSITE" id="PS51202">
    <property type="entry name" value="RCK_C"/>
    <property type="match status" value="1"/>
</dbReference>
<evidence type="ECO:0000255" key="1">
    <source>
        <dbReference type="HAMAP-Rule" id="MF_01075"/>
    </source>
</evidence>
<reference key="1">
    <citation type="journal article" date="2011" name="J. Bacteriol.">
        <title>Comparative genomics of 28 Salmonella enterica isolates: evidence for CRISPR-mediated adaptive sublineage evolution.</title>
        <authorList>
            <person name="Fricke W.F."/>
            <person name="Mammel M.K."/>
            <person name="McDermott P.F."/>
            <person name="Tartera C."/>
            <person name="White D.G."/>
            <person name="Leclerc J.E."/>
            <person name="Ravel J."/>
            <person name="Cebula T.A."/>
        </authorList>
    </citation>
    <scope>NUCLEOTIDE SEQUENCE [LARGE SCALE GENOMIC DNA]</scope>
    <source>
        <strain>CT_02021853</strain>
    </source>
</reference>
<keyword id="KW-0050">Antiport</keyword>
<keyword id="KW-0997">Cell inner membrane</keyword>
<keyword id="KW-1003">Cell membrane</keyword>
<keyword id="KW-0406">Ion transport</keyword>
<keyword id="KW-0472">Membrane</keyword>
<keyword id="KW-0630">Potassium</keyword>
<keyword id="KW-0633">Potassium transport</keyword>
<keyword id="KW-0812">Transmembrane</keyword>
<keyword id="KW-1133">Transmembrane helix</keyword>
<keyword id="KW-0813">Transport</keyword>
<accession>B5FTN3</accession>
<organism>
    <name type="scientific">Salmonella dublin (strain CT_02021853)</name>
    <dbReference type="NCBI Taxonomy" id="439851"/>
    <lineage>
        <taxon>Bacteria</taxon>
        <taxon>Pseudomonadati</taxon>
        <taxon>Pseudomonadota</taxon>
        <taxon>Gammaproteobacteria</taxon>
        <taxon>Enterobacterales</taxon>
        <taxon>Enterobacteriaceae</taxon>
        <taxon>Salmonella</taxon>
    </lineage>
</organism>
<proteinExistence type="inferred from homology"/>